<accession>Q2YQY8</accession>
<reference key="1">
    <citation type="journal article" date="2005" name="Infect. Immun.">
        <title>Whole-genome analyses of speciation events in pathogenic Brucellae.</title>
        <authorList>
            <person name="Chain P.S."/>
            <person name="Comerci D.J."/>
            <person name="Tolmasky M.E."/>
            <person name="Larimer F.W."/>
            <person name="Malfatti S.A."/>
            <person name="Vergez L.M."/>
            <person name="Aguero F."/>
            <person name="Land M.L."/>
            <person name="Ugalde R.A."/>
            <person name="Garcia E."/>
        </authorList>
    </citation>
    <scope>NUCLEOTIDE SEQUENCE [LARGE SCALE GENOMIC DNA]</scope>
    <source>
        <strain>2308</strain>
    </source>
</reference>
<gene>
    <name evidence="1" type="primary">hisF</name>
    <name type="ordered locus">BAB1_2086</name>
</gene>
<feature type="chain" id="PRO_0000230122" description="Imidazole glycerol phosphate synthase subunit HisF">
    <location>
        <begin position="1"/>
        <end position="261"/>
    </location>
</feature>
<feature type="active site" evidence="1">
    <location>
        <position position="12"/>
    </location>
</feature>
<feature type="active site" evidence="1">
    <location>
        <position position="131"/>
    </location>
</feature>
<dbReference type="EC" id="4.3.2.10" evidence="1"/>
<dbReference type="EMBL" id="AM040264">
    <property type="protein sequence ID" value="CAJ12042.1"/>
    <property type="molecule type" value="Genomic_DNA"/>
</dbReference>
<dbReference type="RefSeq" id="WP_002965151.1">
    <property type="nucleotide sequence ID" value="NZ_KN046823.1"/>
</dbReference>
<dbReference type="SMR" id="Q2YQY8"/>
<dbReference type="STRING" id="359391.BAB1_2086"/>
<dbReference type="GeneID" id="97534652"/>
<dbReference type="KEGG" id="bmf:BAB1_2086"/>
<dbReference type="HOGENOM" id="CLU_048577_4_0_5"/>
<dbReference type="UniPathway" id="UPA00031">
    <property type="reaction ID" value="UER00010"/>
</dbReference>
<dbReference type="PRO" id="PR:Q2YQY8"/>
<dbReference type="Proteomes" id="UP000002719">
    <property type="component" value="Chromosome I"/>
</dbReference>
<dbReference type="GO" id="GO:0005737">
    <property type="term" value="C:cytoplasm"/>
    <property type="evidence" value="ECO:0007669"/>
    <property type="project" value="UniProtKB-SubCell"/>
</dbReference>
<dbReference type="GO" id="GO:0000107">
    <property type="term" value="F:imidazoleglycerol-phosphate synthase activity"/>
    <property type="evidence" value="ECO:0007669"/>
    <property type="project" value="UniProtKB-UniRule"/>
</dbReference>
<dbReference type="GO" id="GO:0016829">
    <property type="term" value="F:lyase activity"/>
    <property type="evidence" value="ECO:0007669"/>
    <property type="project" value="UniProtKB-KW"/>
</dbReference>
<dbReference type="GO" id="GO:0000105">
    <property type="term" value="P:L-histidine biosynthetic process"/>
    <property type="evidence" value="ECO:0007669"/>
    <property type="project" value="UniProtKB-UniRule"/>
</dbReference>
<dbReference type="CDD" id="cd04731">
    <property type="entry name" value="HisF"/>
    <property type="match status" value="1"/>
</dbReference>
<dbReference type="FunFam" id="3.20.20.70:FF:000006">
    <property type="entry name" value="Imidazole glycerol phosphate synthase subunit HisF"/>
    <property type="match status" value="1"/>
</dbReference>
<dbReference type="Gene3D" id="3.20.20.70">
    <property type="entry name" value="Aldolase class I"/>
    <property type="match status" value="1"/>
</dbReference>
<dbReference type="HAMAP" id="MF_01013">
    <property type="entry name" value="HisF"/>
    <property type="match status" value="1"/>
</dbReference>
<dbReference type="InterPro" id="IPR013785">
    <property type="entry name" value="Aldolase_TIM"/>
</dbReference>
<dbReference type="InterPro" id="IPR006062">
    <property type="entry name" value="His_biosynth"/>
</dbReference>
<dbReference type="InterPro" id="IPR004651">
    <property type="entry name" value="HisF"/>
</dbReference>
<dbReference type="InterPro" id="IPR050064">
    <property type="entry name" value="IGPS_HisA/HisF"/>
</dbReference>
<dbReference type="InterPro" id="IPR011060">
    <property type="entry name" value="RibuloseP-bd_barrel"/>
</dbReference>
<dbReference type="NCBIfam" id="TIGR00735">
    <property type="entry name" value="hisF"/>
    <property type="match status" value="1"/>
</dbReference>
<dbReference type="PANTHER" id="PTHR21235:SF2">
    <property type="entry name" value="IMIDAZOLE GLYCEROL PHOSPHATE SYNTHASE HISHF"/>
    <property type="match status" value="1"/>
</dbReference>
<dbReference type="PANTHER" id="PTHR21235">
    <property type="entry name" value="IMIDAZOLE GLYCEROL PHOSPHATE SYNTHASE SUBUNIT HISF/H IGP SYNTHASE SUBUNIT HISF/H"/>
    <property type="match status" value="1"/>
</dbReference>
<dbReference type="Pfam" id="PF00977">
    <property type="entry name" value="His_biosynth"/>
    <property type="match status" value="1"/>
</dbReference>
<dbReference type="SUPFAM" id="SSF51366">
    <property type="entry name" value="Ribulose-phoshate binding barrel"/>
    <property type="match status" value="1"/>
</dbReference>
<sequence length="261" mass="27474">MTLKARVIPCLDVKDGRVVKGVNFVDLIDAGDPVEAARAYDAAGADELCFLDITASSDNRETIFDVVARTAEQCFMPLTVGGGVRQVADIRKLLLAGADKVSINTAAVKNPEFVAEAADKFGNQCIVVAIDAKKVSGAGENDRWEIFTHGGRQPTGIDAVEFAQKVVDLGAGEILLTSMDRDGTKAGYDVALTRAVADSVRAPVIASGGVGTLDHLVAGIRDGHATAVLAASIFHFGTYTIGEAKRYMAEAGIPMRLDPVR</sequence>
<keyword id="KW-0028">Amino-acid biosynthesis</keyword>
<keyword id="KW-0963">Cytoplasm</keyword>
<keyword id="KW-0368">Histidine biosynthesis</keyword>
<keyword id="KW-0456">Lyase</keyword>
<keyword id="KW-1185">Reference proteome</keyword>
<evidence type="ECO:0000255" key="1">
    <source>
        <dbReference type="HAMAP-Rule" id="MF_01013"/>
    </source>
</evidence>
<organism>
    <name type="scientific">Brucella abortus (strain 2308)</name>
    <dbReference type="NCBI Taxonomy" id="359391"/>
    <lineage>
        <taxon>Bacteria</taxon>
        <taxon>Pseudomonadati</taxon>
        <taxon>Pseudomonadota</taxon>
        <taxon>Alphaproteobacteria</taxon>
        <taxon>Hyphomicrobiales</taxon>
        <taxon>Brucellaceae</taxon>
        <taxon>Brucella/Ochrobactrum group</taxon>
        <taxon>Brucella</taxon>
    </lineage>
</organism>
<protein>
    <recommendedName>
        <fullName evidence="1">Imidazole glycerol phosphate synthase subunit HisF</fullName>
        <ecNumber evidence="1">4.3.2.10</ecNumber>
    </recommendedName>
    <alternativeName>
        <fullName evidence="1">IGP synthase cyclase subunit</fullName>
    </alternativeName>
    <alternativeName>
        <fullName evidence="1">IGP synthase subunit HisF</fullName>
    </alternativeName>
    <alternativeName>
        <fullName evidence="1">ImGP synthase subunit HisF</fullName>
        <shortName evidence="1">IGPS subunit HisF</shortName>
    </alternativeName>
</protein>
<comment type="function">
    <text evidence="1">IGPS catalyzes the conversion of PRFAR and glutamine to IGP, AICAR and glutamate. The HisF subunit catalyzes the cyclization activity that produces IGP and AICAR from PRFAR using the ammonia provided by the HisH subunit.</text>
</comment>
<comment type="catalytic activity">
    <reaction evidence="1">
        <text>5-[(5-phospho-1-deoxy-D-ribulos-1-ylimino)methylamino]-1-(5-phospho-beta-D-ribosyl)imidazole-4-carboxamide + L-glutamine = D-erythro-1-(imidazol-4-yl)glycerol 3-phosphate + 5-amino-1-(5-phospho-beta-D-ribosyl)imidazole-4-carboxamide + L-glutamate + H(+)</text>
        <dbReference type="Rhea" id="RHEA:24793"/>
        <dbReference type="ChEBI" id="CHEBI:15378"/>
        <dbReference type="ChEBI" id="CHEBI:29985"/>
        <dbReference type="ChEBI" id="CHEBI:58278"/>
        <dbReference type="ChEBI" id="CHEBI:58359"/>
        <dbReference type="ChEBI" id="CHEBI:58475"/>
        <dbReference type="ChEBI" id="CHEBI:58525"/>
        <dbReference type="EC" id="4.3.2.10"/>
    </reaction>
</comment>
<comment type="pathway">
    <text evidence="1">Amino-acid biosynthesis; L-histidine biosynthesis; L-histidine from 5-phospho-alpha-D-ribose 1-diphosphate: step 5/9.</text>
</comment>
<comment type="subunit">
    <text evidence="1">Heterodimer of HisH and HisF.</text>
</comment>
<comment type="subcellular location">
    <subcellularLocation>
        <location evidence="1">Cytoplasm</location>
    </subcellularLocation>
</comment>
<comment type="similarity">
    <text evidence="1">Belongs to the HisA/HisF family.</text>
</comment>
<name>HIS6_BRUA2</name>
<proteinExistence type="inferred from homology"/>